<gene>
    <name evidence="1" type="primary">tgt</name>
    <name type="ordered locus">TT_C1676</name>
</gene>
<evidence type="ECO:0000255" key="1">
    <source>
        <dbReference type="HAMAP-Rule" id="MF_00168"/>
    </source>
</evidence>
<protein>
    <recommendedName>
        <fullName evidence="1">Queuine tRNA-ribosyltransferase</fullName>
        <ecNumber evidence="1">2.4.2.29</ecNumber>
    </recommendedName>
    <alternativeName>
        <fullName evidence="1">Guanine insertion enzyme</fullName>
    </alternativeName>
    <alternativeName>
        <fullName evidence="1">tRNA-guanine transglycosylase</fullName>
    </alternativeName>
</protein>
<accession>Q72H19</accession>
<feature type="chain" id="PRO_0000135546" description="Queuine tRNA-ribosyltransferase">
    <location>
        <begin position="1"/>
        <end position="385"/>
    </location>
</feature>
<feature type="region of interest" description="RNA binding" evidence="1">
    <location>
        <begin position="246"/>
        <end position="252"/>
    </location>
</feature>
<feature type="region of interest" description="RNA binding; important for wobble base 34 recognition" evidence="1">
    <location>
        <begin position="270"/>
        <end position="274"/>
    </location>
</feature>
<feature type="active site" description="Proton acceptor" evidence="1">
    <location>
        <position position="92"/>
    </location>
</feature>
<feature type="active site" description="Nucleophile" evidence="1">
    <location>
        <position position="265"/>
    </location>
</feature>
<feature type="binding site" evidence="1">
    <location>
        <begin position="92"/>
        <end position="96"/>
    </location>
    <ligand>
        <name>substrate</name>
    </ligand>
</feature>
<feature type="binding site" evidence="1">
    <location>
        <position position="146"/>
    </location>
    <ligand>
        <name>substrate</name>
    </ligand>
</feature>
<feature type="binding site" evidence="1">
    <location>
        <position position="188"/>
    </location>
    <ligand>
        <name>substrate</name>
    </ligand>
</feature>
<feature type="binding site" evidence="1">
    <location>
        <position position="215"/>
    </location>
    <ligand>
        <name>substrate</name>
    </ligand>
</feature>
<feature type="binding site" evidence="1">
    <location>
        <position position="303"/>
    </location>
    <ligand>
        <name>Zn(2+)</name>
        <dbReference type="ChEBI" id="CHEBI:29105"/>
    </ligand>
</feature>
<feature type="binding site" evidence="1">
    <location>
        <position position="305"/>
    </location>
    <ligand>
        <name>Zn(2+)</name>
        <dbReference type="ChEBI" id="CHEBI:29105"/>
    </ligand>
</feature>
<feature type="binding site" evidence="1">
    <location>
        <position position="308"/>
    </location>
    <ligand>
        <name>Zn(2+)</name>
        <dbReference type="ChEBI" id="CHEBI:29105"/>
    </ligand>
</feature>
<feature type="binding site" evidence="1">
    <location>
        <position position="334"/>
    </location>
    <ligand>
        <name>Zn(2+)</name>
        <dbReference type="ChEBI" id="CHEBI:29105"/>
    </ligand>
</feature>
<comment type="function">
    <text evidence="1">Catalyzes the base-exchange of a guanine (G) residue with the queuine precursor 7-aminomethyl-7-deazaguanine (PreQ1) at position 34 (anticodon wobble position) in tRNAs with GU(N) anticodons (tRNA-Asp, -Asn, -His and -Tyr). Catalysis occurs through a double-displacement mechanism. The nucleophile active site attacks the C1' of nucleotide 34 to detach the guanine base from the RNA, forming a covalent enzyme-RNA intermediate. The proton acceptor active site deprotonates the incoming PreQ1, allowing a nucleophilic attack on the C1' of the ribose to form the product. After dissociation, two additional enzymatic reactions on the tRNA convert PreQ1 to queuine (Q), resulting in the hypermodified nucleoside queuosine (7-(((4,5-cis-dihydroxy-2-cyclopenten-1-yl)amino)methyl)-7-deazaguanosine).</text>
</comment>
<comment type="catalytic activity">
    <reaction evidence="1">
        <text>7-aminomethyl-7-carbaguanine + guanosine(34) in tRNA = 7-aminomethyl-7-carbaguanosine(34) in tRNA + guanine</text>
        <dbReference type="Rhea" id="RHEA:24104"/>
        <dbReference type="Rhea" id="RHEA-COMP:10341"/>
        <dbReference type="Rhea" id="RHEA-COMP:10342"/>
        <dbReference type="ChEBI" id="CHEBI:16235"/>
        <dbReference type="ChEBI" id="CHEBI:58703"/>
        <dbReference type="ChEBI" id="CHEBI:74269"/>
        <dbReference type="ChEBI" id="CHEBI:82833"/>
        <dbReference type="EC" id="2.4.2.29"/>
    </reaction>
</comment>
<comment type="cofactor">
    <cofactor evidence="1">
        <name>Zn(2+)</name>
        <dbReference type="ChEBI" id="CHEBI:29105"/>
    </cofactor>
    <text evidence="1">Binds 1 zinc ion per subunit.</text>
</comment>
<comment type="pathway">
    <text evidence="1">tRNA modification; tRNA-queuosine biosynthesis.</text>
</comment>
<comment type="subunit">
    <text evidence="1">Homodimer. Within each dimer, one monomer is responsible for RNA recognition and catalysis, while the other monomer binds to the replacement base PreQ1.</text>
</comment>
<comment type="similarity">
    <text evidence="1">Belongs to the queuine tRNA-ribosyltransferase family.</text>
</comment>
<name>TGT_THET2</name>
<keyword id="KW-0328">Glycosyltransferase</keyword>
<keyword id="KW-0479">Metal-binding</keyword>
<keyword id="KW-0671">Queuosine biosynthesis</keyword>
<keyword id="KW-0808">Transferase</keyword>
<keyword id="KW-0819">tRNA processing</keyword>
<keyword id="KW-0862">Zinc</keyword>
<sequence>MDPFRFQVEARAGRARVGRLFTPHGAVETPLFMPVGTAGSVKGLMPKDLEAIGSQVLLANTYHLLLRPGPERVRALGGLHGFAGWKGPWLTDSGGFQVMSLGHMRRIDEEGVVFQSHLDGRLIKLTPERSIAVQEALGADLIMAFDECPPYPSPREYLEASLERTLRWLERSLKAKTRPDQALFGIAQGGTDPELRRRSTLETIRFDLPGYAIGGLAVGEPKEAMFAMVELSTRLLPEDRPRYLMGVGHPEDLVAAMGLGVDLFDCVYPTRTGRFGSALVPEGRLNLKNARFLEDRRPLEEGCDCYTCQTFGRAYLAHLVRAGEMLGGILLSLHNLRHLHRLTEAARQAIREGRYGDFAREFARRRFGREVPPWFREALAAGGHW</sequence>
<proteinExistence type="inferred from homology"/>
<reference key="1">
    <citation type="journal article" date="2004" name="Nat. Biotechnol.">
        <title>The genome sequence of the extreme thermophile Thermus thermophilus.</title>
        <authorList>
            <person name="Henne A."/>
            <person name="Brueggemann H."/>
            <person name="Raasch C."/>
            <person name="Wiezer A."/>
            <person name="Hartsch T."/>
            <person name="Liesegang H."/>
            <person name="Johann A."/>
            <person name="Lienard T."/>
            <person name="Gohl O."/>
            <person name="Martinez-Arias R."/>
            <person name="Jacobi C."/>
            <person name="Starkuviene V."/>
            <person name="Schlenczeck S."/>
            <person name="Dencker S."/>
            <person name="Huber R."/>
            <person name="Klenk H.-P."/>
            <person name="Kramer W."/>
            <person name="Merkl R."/>
            <person name="Gottschalk G."/>
            <person name="Fritz H.-J."/>
        </authorList>
    </citation>
    <scope>NUCLEOTIDE SEQUENCE [LARGE SCALE GENOMIC DNA]</scope>
    <source>
        <strain>ATCC BAA-163 / DSM 7039 / HB27</strain>
    </source>
</reference>
<dbReference type="EC" id="2.4.2.29" evidence="1"/>
<dbReference type="EMBL" id="AE017221">
    <property type="protein sequence ID" value="AAS82018.1"/>
    <property type="molecule type" value="Genomic_DNA"/>
</dbReference>
<dbReference type="RefSeq" id="WP_011174042.1">
    <property type="nucleotide sequence ID" value="NC_005835.1"/>
</dbReference>
<dbReference type="SMR" id="Q72H19"/>
<dbReference type="KEGG" id="tth:TT_C1676"/>
<dbReference type="eggNOG" id="COG0343">
    <property type="taxonomic scope" value="Bacteria"/>
</dbReference>
<dbReference type="HOGENOM" id="CLU_022060_0_1_0"/>
<dbReference type="OrthoDB" id="9805417at2"/>
<dbReference type="UniPathway" id="UPA00392"/>
<dbReference type="Proteomes" id="UP000000592">
    <property type="component" value="Chromosome"/>
</dbReference>
<dbReference type="GO" id="GO:0005829">
    <property type="term" value="C:cytosol"/>
    <property type="evidence" value="ECO:0007669"/>
    <property type="project" value="TreeGrafter"/>
</dbReference>
<dbReference type="GO" id="GO:0046872">
    <property type="term" value="F:metal ion binding"/>
    <property type="evidence" value="ECO:0007669"/>
    <property type="project" value="UniProtKB-KW"/>
</dbReference>
<dbReference type="GO" id="GO:0008479">
    <property type="term" value="F:tRNA-guanosine(34) queuine transglycosylase activity"/>
    <property type="evidence" value="ECO:0007669"/>
    <property type="project" value="UniProtKB-UniRule"/>
</dbReference>
<dbReference type="GO" id="GO:0008616">
    <property type="term" value="P:queuosine biosynthetic process"/>
    <property type="evidence" value="ECO:0007669"/>
    <property type="project" value="UniProtKB-UniRule"/>
</dbReference>
<dbReference type="GO" id="GO:0101030">
    <property type="term" value="P:tRNA-guanine transglycosylation"/>
    <property type="evidence" value="ECO:0007669"/>
    <property type="project" value="InterPro"/>
</dbReference>
<dbReference type="FunFam" id="3.20.20.105:FF:000001">
    <property type="entry name" value="Queuine tRNA-ribosyltransferase"/>
    <property type="match status" value="1"/>
</dbReference>
<dbReference type="Gene3D" id="3.20.20.105">
    <property type="entry name" value="Queuine tRNA-ribosyltransferase-like"/>
    <property type="match status" value="1"/>
</dbReference>
<dbReference type="HAMAP" id="MF_00168">
    <property type="entry name" value="Q_tRNA_Tgt"/>
    <property type="match status" value="1"/>
</dbReference>
<dbReference type="InterPro" id="IPR004803">
    <property type="entry name" value="TGT"/>
</dbReference>
<dbReference type="InterPro" id="IPR036511">
    <property type="entry name" value="TGT-like_sf"/>
</dbReference>
<dbReference type="InterPro" id="IPR002616">
    <property type="entry name" value="tRNA_ribo_trans-like"/>
</dbReference>
<dbReference type="NCBIfam" id="TIGR00430">
    <property type="entry name" value="Q_tRNA_tgt"/>
    <property type="match status" value="1"/>
</dbReference>
<dbReference type="NCBIfam" id="TIGR00449">
    <property type="entry name" value="tgt_general"/>
    <property type="match status" value="1"/>
</dbReference>
<dbReference type="PANTHER" id="PTHR43530">
    <property type="entry name" value="QUEUINE TRNA-RIBOSYLTRANSFERASE CATALYTIC SUBUNIT 1"/>
    <property type="match status" value="1"/>
</dbReference>
<dbReference type="PANTHER" id="PTHR43530:SF1">
    <property type="entry name" value="QUEUINE TRNA-RIBOSYLTRANSFERASE CATALYTIC SUBUNIT 1"/>
    <property type="match status" value="1"/>
</dbReference>
<dbReference type="Pfam" id="PF01702">
    <property type="entry name" value="TGT"/>
    <property type="match status" value="1"/>
</dbReference>
<dbReference type="SUPFAM" id="SSF51713">
    <property type="entry name" value="tRNA-guanine transglycosylase"/>
    <property type="match status" value="1"/>
</dbReference>
<organism>
    <name type="scientific">Thermus thermophilus (strain ATCC BAA-163 / DSM 7039 / HB27)</name>
    <dbReference type="NCBI Taxonomy" id="262724"/>
    <lineage>
        <taxon>Bacteria</taxon>
        <taxon>Thermotogati</taxon>
        <taxon>Deinococcota</taxon>
        <taxon>Deinococci</taxon>
        <taxon>Thermales</taxon>
        <taxon>Thermaceae</taxon>
        <taxon>Thermus</taxon>
    </lineage>
</organism>